<dbReference type="EC" id="3.6.5.3" evidence="2"/>
<dbReference type="EMBL" id="CP000548">
    <property type="protein sequence ID" value="ABO04798.1"/>
    <property type="molecule type" value="Genomic_DNA"/>
</dbReference>
<dbReference type="EMBL" id="CP000548">
    <property type="protein sequence ID" value="ABO07032.1"/>
    <property type="molecule type" value="Genomic_DNA"/>
</dbReference>
<dbReference type="SMR" id="A3MRT8"/>
<dbReference type="KEGG" id="bmaz:BM44_3043"/>
<dbReference type="KEGG" id="bmaz:BM44_3058"/>
<dbReference type="KEGG" id="bmn:BMA10247_3461"/>
<dbReference type="KEGG" id="bmn:BMA10247_3476"/>
<dbReference type="PATRIC" id="fig|320389.8.peg.3415"/>
<dbReference type="GO" id="GO:0005737">
    <property type="term" value="C:cytoplasm"/>
    <property type="evidence" value="ECO:0007669"/>
    <property type="project" value="UniProtKB-SubCell"/>
</dbReference>
<dbReference type="GO" id="GO:0005525">
    <property type="term" value="F:GTP binding"/>
    <property type="evidence" value="ECO:0007669"/>
    <property type="project" value="UniProtKB-UniRule"/>
</dbReference>
<dbReference type="GO" id="GO:0003924">
    <property type="term" value="F:GTPase activity"/>
    <property type="evidence" value="ECO:0007669"/>
    <property type="project" value="InterPro"/>
</dbReference>
<dbReference type="GO" id="GO:0097216">
    <property type="term" value="F:guanosine tetraphosphate binding"/>
    <property type="evidence" value="ECO:0007669"/>
    <property type="project" value="UniProtKB-ARBA"/>
</dbReference>
<dbReference type="GO" id="GO:0003746">
    <property type="term" value="F:translation elongation factor activity"/>
    <property type="evidence" value="ECO:0007669"/>
    <property type="project" value="UniProtKB-UniRule"/>
</dbReference>
<dbReference type="CDD" id="cd01884">
    <property type="entry name" value="EF_Tu"/>
    <property type="match status" value="1"/>
</dbReference>
<dbReference type="CDD" id="cd03697">
    <property type="entry name" value="EFTU_II"/>
    <property type="match status" value="1"/>
</dbReference>
<dbReference type="CDD" id="cd03707">
    <property type="entry name" value="EFTU_III"/>
    <property type="match status" value="1"/>
</dbReference>
<dbReference type="FunFam" id="2.40.30.10:FF:000001">
    <property type="entry name" value="Elongation factor Tu"/>
    <property type="match status" value="1"/>
</dbReference>
<dbReference type="FunFam" id="3.40.50.300:FF:000003">
    <property type="entry name" value="Elongation factor Tu"/>
    <property type="match status" value="1"/>
</dbReference>
<dbReference type="Gene3D" id="3.40.50.300">
    <property type="entry name" value="P-loop containing nucleotide triphosphate hydrolases"/>
    <property type="match status" value="1"/>
</dbReference>
<dbReference type="Gene3D" id="2.40.30.10">
    <property type="entry name" value="Translation factors"/>
    <property type="match status" value="2"/>
</dbReference>
<dbReference type="HAMAP" id="MF_00118_B">
    <property type="entry name" value="EF_Tu_B"/>
    <property type="match status" value="1"/>
</dbReference>
<dbReference type="InterPro" id="IPR041709">
    <property type="entry name" value="EF-Tu_GTP-bd"/>
</dbReference>
<dbReference type="InterPro" id="IPR050055">
    <property type="entry name" value="EF-Tu_GTPase"/>
</dbReference>
<dbReference type="InterPro" id="IPR004161">
    <property type="entry name" value="EFTu-like_2"/>
</dbReference>
<dbReference type="InterPro" id="IPR033720">
    <property type="entry name" value="EFTU_2"/>
</dbReference>
<dbReference type="InterPro" id="IPR031157">
    <property type="entry name" value="G_TR_CS"/>
</dbReference>
<dbReference type="InterPro" id="IPR027417">
    <property type="entry name" value="P-loop_NTPase"/>
</dbReference>
<dbReference type="InterPro" id="IPR005225">
    <property type="entry name" value="Small_GTP-bd"/>
</dbReference>
<dbReference type="InterPro" id="IPR000795">
    <property type="entry name" value="T_Tr_GTP-bd_dom"/>
</dbReference>
<dbReference type="InterPro" id="IPR009000">
    <property type="entry name" value="Transl_B-barrel_sf"/>
</dbReference>
<dbReference type="InterPro" id="IPR009001">
    <property type="entry name" value="Transl_elong_EF1A/Init_IF2_C"/>
</dbReference>
<dbReference type="InterPro" id="IPR004541">
    <property type="entry name" value="Transl_elong_EFTu/EF1A_bac/org"/>
</dbReference>
<dbReference type="InterPro" id="IPR004160">
    <property type="entry name" value="Transl_elong_EFTu/EF1A_C"/>
</dbReference>
<dbReference type="NCBIfam" id="TIGR00485">
    <property type="entry name" value="EF-Tu"/>
    <property type="match status" value="1"/>
</dbReference>
<dbReference type="NCBIfam" id="NF000766">
    <property type="entry name" value="PRK00049.1"/>
    <property type="match status" value="1"/>
</dbReference>
<dbReference type="NCBIfam" id="NF009372">
    <property type="entry name" value="PRK12735.1"/>
    <property type="match status" value="1"/>
</dbReference>
<dbReference type="NCBIfam" id="NF009373">
    <property type="entry name" value="PRK12736.1"/>
    <property type="match status" value="1"/>
</dbReference>
<dbReference type="NCBIfam" id="TIGR00231">
    <property type="entry name" value="small_GTP"/>
    <property type="match status" value="1"/>
</dbReference>
<dbReference type="PANTHER" id="PTHR43721:SF22">
    <property type="entry name" value="ELONGATION FACTOR TU, MITOCHONDRIAL"/>
    <property type="match status" value="1"/>
</dbReference>
<dbReference type="PANTHER" id="PTHR43721">
    <property type="entry name" value="ELONGATION FACTOR TU-RELATED"/>
    <property type="match status" value="1"/>
</dbReference>
<dbReference type="Pfam" id="PF00009">
    <property type="entry name" value="GTP_EFTU"/>
    <property type="match status" value="1"/>
</dbReference>
<dbReference type="Pfam" id="PF03144">
    <property type="entry name" value="GTP_EFTU_D2"/>
    <property type="match status" value="1"/>
</dbReference>
<dbReference type="Pfam" id="PF03143">
    <property type="entry name" value="GTP_EFTU_D3"/>
    <property type="match status" value="1"/>
</dbReference>
<dbReference type="PRINTS" id="PR00315">
    <property type="entry name" value="ELONGATNFCT"/>
</dbReference>
<dbReference type="SUPFAM" id="SSF50465">
    <property type="entry name" value="EF-Tu/eEF-1alpha/eIF2-gamma C-terminal domain"/>
    <property type="match status" value="1"/>
</dbReference>
<dbReference type="SUPFAM" id="SSF52540">
    <property type="entry name" value="P-loop containing nucleoside triphosphate hydrolases"/>
    <property type="match status" value="1"/>
</dbReference>
<dbReference type="SUPFAM" id="SSF50447">
    <property type="entry name" value="Translation proteins"/>
    <property type="match status" value="1"/>
</dbReference>
<dbReference type="PROSITE" id="PS00301">
    <property type="entry name" value="G_TR_1"/>
    <property type="match status" value="1"/>
</dbReference>
<dbReference type="PROSITE" id="PS51722">
    <property type="entry name" value="G_TR_2"/>
    <property type="match status" value="1"/>
</dbReference>
<evidence type="ECO:0000250" key="1"/>
<evidence type="ECO:0000255" key="2">
    <source>
        <dbReference type="HAMAP-Rule" id="MF_00118"/>
    </source>
</evidence>
<sequence>MAKEKFERTKPHVNVGTIGHVDHGKTTLTAAIATVLSAKFGGEAKKYDEIDAAPEEKARGITINTAHIEYETANRHYAHVDCPGHADYVKNMITGAAQMDGAILVCSAADGPMPQTREHILLARQVGVPYIIVFLNKCDMVDDAELLELVEMEVRELLSKYDFPGDDTPIIKGSAKLALEGDKGELGEVAIMNLADALDTYIPTPERAVDGAFLMPVEDVFSISGRGTVVTGRVERGVIKVGEEIEIVGIKATAKTTCTGVEMFRKLLDQGQAGDNVGILLRGTKREDVERGQVLAKPGSITPHTHFTAEVYVLSKDEGGRHTPFFNNYRPQFYFRTTDVTGSIELPKDKEMVMPGDNVSITVKLIAPIAMEEGLRFAIREGGRTVGAGVVAKIIE</sequence>
<organism>
    <name type="scientific">Burkholderia mallei (strain NCTC 10247)</name>
    <dbReference type="NCBI Taxonomy" id="320389"/>
    <lineage>
        <taxon>Bacteria</taxon>
        <taxon>Pseudomonadati</taxon>
        <taxon>Pseudomonadota</taxon>
        <taxon>Betaproteobacteria</taxon>
        <taxon>Burkholderiales</taxon>
        <taxon>Burkholderiaceae</taxon>
        <taxon>Burkholderia</taxon>
        <taxon>pseudomallei group</taxon>
    </lineage>
</organism>
<accession>A3MRT8</accession>
<feature type="chain" id="PRO_0000337339" description="Elongation factor Tu">
    <location>
        <begin position="1"/>
        <end position="396"/>
    </location>
</feature>
<feature type="domain" description="tr-type G">
    <location>
        <begin position="10"/>
        <end position="206"/>
    </location>
</feature>
<feature type="region of interest" description="G1" evidence="1">
    <location>
        <begin position="19"/>
        <end position="26"/>
    </location>
</feature>
<feature type="region of interest" description="G2" evidence="1">
    <location>
        <begin position="60"/>
        <end position="64"/>
    </location>
</feature>
<feature type="region of interest" description="G3" evidence="1">
    <location>
        <begin position="81"/>
        <end position="84"/>
    </location>
</feature>
<feature type="region of interest" description="G4" evidence="1">
    <location>
        <begin position="136"/>
        <end position="139"/>
    </location>
</feature>
<feature type="region of interest" description="G5" evidence="1">
    <location>
        <begin position="174"/>
        <end position="176"/>
    </location>
</feature>
<feature type="binding site" evidence="2">
    <location>
        <begin position="19"/>
        <end position="26"/>
    </location>
    <ligand>
        <name>GTP</name>
        <dbReference type="ChEBI" id="CHEBI:37565"/>
    </ligand>
</feature>
<feature type="binding site" evidence="2">
    <location>
        <position position="26"/>
    </location>
    <ligand>
        <name>Mg(2+)</name>
        <dbReference type="ChEBI" id="CHEBI:18420"/>
    </ligand>
</feature>
<feature type="binding site" evidence="2">
    <location>
        <begin position="81"/>
        <end position="85"/>
    </location>
    <ligand>
        <name>GTP</name>
        <dbReference type="ChEBI" id="CHEBI:37565"/>
    </ligand>
</feature>
<feature type="binding site" evidence="2">
    <location>
        <begin position="136"/>
        <end position="139"/>
    </location>
    <ligand>
        <name>GTP</name>
        <dbReference type="ChEBI" id="CHEBI:37565"/>
    </ligand>
</feature>
<reference key="1">
    <citation type="journal article" date="2010" name="Genome Biol. Evol.">
        <title>Continuing evolution of Burkholderia mallei through genome reduction and large-scale rearrangements.</title>
        <authorList>
            <person name="Losada L."/>
            <person name="Ronning C.M."/>
            <person name="DeShazer D."/>
            <person name="Woods D."/>
            <person name="Fedorova N."/>
            <person name="Kim H.S."/>
            <person name="Shabalina S.A."/>
            <person name="Pearson T.R."/>
            <person name="Brinkac L."/>
            <person name="Tan P."/>
            <person name="Nandi T."/>
            <person name="Crabtree J."/>
            <person name="Badger J."/>
            <person name="Beckstrom-Sternberg S."/>
            <person name="Saqib M."/>
            <person name="Schutzer S.E."/>
            <person name="Keim P."/>
            <person name="Nierman W.C."/>
        </authorList>
    </citation>
    <scope>NUCLEOTIDE SEQUENCE [LARGE SCALE GENOMIC DNA]</scope>
    <source>
        <strain>NCTC 10247</strain>
    </source>
</reference>
<comment type="function">
    <text evidence="2">GTP hydrolase that promotes the GTP-dependent binding of aminoacyl-tRNA to the A-site of ribosomes during protein biosynthesis.</text>
</comment>
<comment type="catalytic activity">
    <reaction evidence="2">
        <text>GTP + H2O = GDP + phosphate + H(+)</text>
        <dbReference type="Rhea" id="RHEA:19669"/>
        <dbReference type="ChEBI" id="CHEBI:15377"/>
        <dbReference type="ChEBI" id="CHEBI:15378"/>
        <dbReference type="ChEBI" id="CHEBI:37565"/>
        <dbReference type="ChEBI" id="CHEBI:43474"/>
        <dbReference type="ChEBI" id="CHEBI:58189"/>
        <dbReference type="EC" id="3.6.5.3"/>
    </reaction>
    <physiologicalReaction direction="left-to-right" evidence="2">
        <dbReference type="Rhea" id="RHEA:19670"/>
    </physiologicalReaction>
</comment>
<comment type="subunit">
    <text evidence="2">Monomer.</text>
</comment>
<comment type="subcellular location">
    <subcellularLocation>
        <location evidence="2">Cytoplasm</location>
    </subcellularLocation>
</comment>
<comment type="similarity">
    <text evidence="2">Belongs to the TRAFAC class translation factor GTPase superfamily. Classic translation factor GTPase family. EF-Tu/EF-1A subfamily.</text>
</comment>
<proteinExistence type="inferred from homology"/>
<name>EFTU_BURM7</name>
<protein>
    <recommendedName>
        <fullName evidence="2">Elongation factor Tu</fullName>
        <shortName evidence="2">EF-Tu</shortName>
        <ecNumber evidence="2">3.6.5.3</ecNumber>
    </recommendedName>
</protein>
<keyword id="KW-0963">Cytoplasm</keyword>
<keyword id="KW-0251">Elongation factor</keyword>
<keyword id="KW-0342">GTP-binding</keyword>
<keyword id="KW-0378">Hydrolase</keyword>
<keyword id="KW-0460">Magnesium</keyword>
<keyword id="KW-0479">Metal-binding</keyword>
<keyword id="KW-0547">Nucleotide-binding</keyword>
<keyword id="KW-0648">Protein biosynthesis</keyword>
<gene>
    <name evidence="2" type="primary">tuf1</name>
    <name type="ordered locus">BMA10247_3461</name>
</gene>
<gene>
    <name evidence="2" type="primary">tuf2</name>
    <name type="ordered locus">BMA10247_3476</name>
</gene>